<accession>B3GXZ4</accession>
<feature type="chain" id="PRO_1000089540" description="LexA repressor">
    <location>
        <begin position="1"/>
        <end position="210"/>
    </location>
</feature>
<feature type="DNA-binding region" description="H-T-H motif" evidence="1">
    <location>
        <begin position="30"/>
        <end position="50"/>
    </location>
</feature>
<feature type="active site" description="For autocatalytic cleavage activity" evidence="1">
    <location>
        <position position="127"/>
    </location>
</feature>
<feature type="active site" description="For autocatalytic cleavage activity" evidence="1">
    <location>
        <position position="164"/>
    </location>
</feature>
<feature type="site" description="Cleavage; by autolysis" evidence="1">
    <location>
        <begin position="92"/>
        <end position="93"/>
    </location>
</feature>
<gene>
    <name evidence="1" type="primary">lexA</name>
    <name type="ordered locus">APP7_1165</name>
</gene>
<protein>
    <recommendedName>
        <fullName evidence="1">LexA repressor</fullName>
        <ecNumber evidence="1">3.4.21.88</ecNumber>
    </recommendedName>
</protein>
<sequence>MSRKHLTARQQEIFDFVKHHIETTGMPPTRVEIAREIGFKSPNAAEEHLKALARKGYIEMLSGTSRGIRILVDNEETAANDDGLPLIGKVAAGTPIMAIEHVESHYPVNGAMFNPNADYLLKVNGNSMEKIGILDGDLLAVHKTNFARNGQVVVARVDDEVTVKRLEKKGDLIYLHPENDELQPIVVDPRIEYIEIEGIAVGVIRNNAWM</sequence>
<evidence type="ECO:0000255" key="1">
    <source>
        <dbReference type="HAMAP-Rule" id="MF_00015"/>
    </source>
</evidence>
<organism>
    <name type="scientific">Actinobacillus pleuropneumoniae serotype 7 (strain AP76)</name>
    <dbReference type="NCBI Taxonomy" id="537457"/>
    <lineage>
        <taxon>Bacteria</taxon>
        <taxon>Pseudomonadati</taxon>
        <taxon>Pseudomonadota</taxon>
        <taxon>Gammaproteobacteria</taxon>
        <taxon>Pasteurellales</taxon>
        <taxon>Pasteurellaceae</taxon>
        <taxon>Actinobacillus</taxon>
    </lineage>
</organism>
<dbReference type="EC" id="3.4.21.88" evidence="1"/>
<dbReference type="EMBL" id="CP001091">
    <property type="protein sequence ID" value="ACE61817.1"/>
    <property type="molecule type" value="Genomic_DNA"/>
</dbReference>
<dbReference type="RefSeq" id="WP_005601574.1">
    <property type="nucleotide sequence ID" value="NC_010939.1"/>
</dbReference>
<dbReference type="SMR" id="B3GXZ4"/>
<dbReference type="MEROPS" id="S24.001"/>
<dbReference type="KEGG" id="apa:APP7_1165"/>
<dbReference type="HOGENOM" id="CLU_066192_45_3_6"/>
<dbReference type="Proteomes" id="UP000001226">
    <property type="component" value="Chromosome"/>
</dbReference>
<dbReference type="GO" id="GO:0003677">
    <property type="term" value="F:DNA binding"/>
    <property type="evidence" value="ECO:0007669"/>
    <property type="project" value="UniProtKB-UniRule"/>
</dbReference>
<dbReference type="GO" id="GO:0004252">
    <property type="term" value="F:serine-type endopeptidase activity"/>
    <property type="evidence" value="ECO:0007669"/>
    <property type="project" value="UniProtKB-UniRule"/>
</dbReference>
<dbReference type="GO" id="GO:0006281">
    <property type="term" value="P:DNA repair"/>
    <property type="evidence" value="ECO:0007669"/>
    <property type="project" value="UniProtKB-UniRule"/>
</dbReference>
<dbReference type="GO" id="GO:0006260">
    <property type="term" value="P:DNA replication"/>
    <property type="evidence" value="ECO:0007669"/>
    <property type="project" value="UniProtKB-UniRule"/>
</dbReference>
<dbReference type="GO" id="GO:0045892">
    <property type="term" value="P:negative regulation of DNA-templated transcription"/>
    <property type="evidence" value="ECO:0007669"/>
    <property type="project" value="UniProtKB-UniRule"/>
</dbReference>
<dbReference type="GO" id="GO:0006508">
    <property type="term" value="P:proteolysis"/>
    <property type="evidence" value="ECO:0007669"/>
    <property type="project" value="InterPro"/>
</dbReference>
<dbReference type="GO" id="GO:0009432">
    <property type="term" value="P:SOS response"/>
    <property type="evidence" value="ECO:0007669"/>
    <property type="project" value="UniProtKB-UniRule"/>
</dbReference>
<dbReference type="CDD" id="cd06529">
    <property type="entry name" value="S24_LexA-like"/>
    <property type="match status" value="1"/>
</dbReference>
<dbReference type="FunFam" id="1.10.10.10:FF:000009">
    <property type="entry name" value="LexA repressor"/>
    <property type="match status" value="1"/>
</dbReference>
<dbReference type="FunFam" id="2.10.109.10:FF:000001">
    <property type="entry name" value="LexA repressor"/>
    <property type="match status" value="1"/>
</dbReference>
<dbReference type="Gene3D" id="2.10.109.10">
    <property type="entry name" value="Umud Fragment, subunit A"/>
    <property type="match status" value="1"/>
</dbReference>
<dbReference type="Gene3D" id="1.10.10.10">
    <property type="entry name" value="Winged helix-like DNA-binding domain superfamily/Winged helix DNA-binding domain"/>
    <property type="match status" value="1"/>
</dbReference>
<dbReference type="HAMAP" id="MF_00015">
    <property type="entry name" value="LexA"/>
    <property type="match status" value="1"/>
</dbReference>
<dbReference type="InterPro" id="IPR006200">
    <property type="entry name" value="LexA"/>
</dbReference>
<dbReference type="InterPro" id="IPR039418">
    <property type="entry name" value="LexA-like"/>
</dbReference>
<dbReference type="InterPro" id="IPR036286">
    <property type="entry name" value="LexA/Signal_pep-like_sf"/>
</dbReference>
<dbReference type="InterPro" id="IPR006199">
    <property type="entry name" value="LexA_DNA-bd_dom"/>
</dbReference>
<dbReference type="InterPro" id="IPR050077">
    <property type="entry name" value="LexA_repressor"/>
</dbReference>
<dbReference type="InterPro" id="IPR006197">
    <property type="entry name" value="Peptidase_S24_LexA"/>
</dbReference>
<dbReference type="InterPro" id="IPR015927">
    <property type="entry name" value="Peptidase_S24_S26A/B/C"/>
</dbReference>
<dbReference type="InterPro" id="IPR036388">
    <property type="entry name" value="WH-like_DNA-bd_sf"/>
</dbReference>
<dbReference type="InterPro" id="IPR036390">
    <property type="entry name" value="WH_DNA-bd_sf"/>
</dbReference>
<dbReference type="NCBIfam" id="TIGR00498">
    <property type="entry name" value="lexA"/>
    <property type="match status" value="1"/>
</dbReference>
<dbReference type="PANTHER" id="PTHR33516">
    <property type="entry name" value="LEXA REPRESSOR"/>
    <property type="match status" value="1"/>
</dbReference>
<dbReference type="PANTHER" id="PTHR33516:SF2">
    <property type="entry name" value="LEXA REPRESSOR-RELATED"/>
    <property type="match status" value="1"/>
</dbReference>
<dbReference type="Pfam" id="PF01726">
    <property type="entry name" value="LexA_DNA_bind"/>
    <property type="match status" value="1"/>
</dbReference>
<dbReference type="Pfam" id="PF00717">
    <property type="entry name" value="Peptidase_S24"/>
    <property type="match status" value="1"/>
</dbReference>
<dbReference type="PRINTS" id="PR00726">
    <property type="entry name" value="LEXASERPTASE"/>
</dbReference>
<dbReference type="SUPFAM" id="SSF51306">
    <property type="entry name" value="LexA/Signal peptidase"/>
    <property type="match status" value="1"/>
</dbReference>
<dbReference type="SUPFAM" id="SSF46785">
    <property type="entry name" value="Winged helix' DNA-binding domain"/>
    <property type="match status" value="1"/>
</dbReference>
<comment type="function">
    <text evidence="1">Represses a number of genes involved in the response to DNA damage (SOS response), including recA and lexA. In the presence of single-stranded DNA, RecA interacts with LexA causing an autocatalytic cleavage which disrupts the DNA-binding part of LexA, leading to derepression of the SOS regulon and eventually DNA repair.</text>
</comment>
<comment type="catalytic activity">
    <reaction evidence="1">
        <text>Hydrolysis of Ala-|-Gly bond in repressor LexA.</text>
        <dbReference type="EC" id="3.4.21.88"/>
    </reaction>
</comment>
<comment type="subunit">
    <text evidence="1">Homodimer.</text>
</comment>
<comment type="similarity">
    <text evidence="1">Belongs to the peptidase S24 family.</text>
</comment>
<reference key="1">
    <citation type="submission" date="2008-06" db="EMBL/GenBank/DDBJ databases">
        <title>Genome and proteome analysis of A. pleuropneumoniae serotype 7.</title>
        <authorList>
            <person name="Linke B."/>
            <person name="Buettner F."/>
            <person name="Martinez-Arias R."/>
            <person name="Goesmann A."/>
            <person name="Baltes N."/>
            <person name="Tegetmeyer H."/>
            <person name="Singh M."/>
            <person name="Gerlach G.F."/>
        </authorList>
    </citation>
    <scope>NUCLEOTIDE SEQUENCE [LARGE SCALE GENOMIC DNA]</scope>
    <source>
        <strain>AP76</strain>
    </source>
</reference>
<proteinExistence type="inferred from homology"/>
<name>LEXA_ACTP7</name>
<keyword id="KW-0068">Autocatalytic cleavage</keyword>
<keyword id="KW-0227">DNA damage</keyword>
<keyword id="KW-0234">DNA repair</keyword>
<keyword id="KW-0235">DNA replication</keyword>
<keyword id="KW-0238">DNA-binding</keyword>
<keyword id="KW-0378">Hydrolase</keyword>
<keyword id="KW-0678">Repressor</keyword>
<keyword id="KW-0742">SOS response</keyword>
<keyword id="KW-0804">Transcription</keyword>
<keyword id="KW-0805">Transcription regulation</keyword>